<organism>
    <name type="scientific">Pectobacterium carotovorum subsp. carotovorum (strain PC1)</name>
    <dbReference type="NCBI Taxonomy" id="561230"/>
    <lineage>
        <taxon>Bacteria</taxon>
        <taxon>Pseudomonadati</taxon>
        <taxon>Pseudomonadota</taxon>
        <taxon>Gammaproteobacteria</taxon>
        <taxon>Enterobacterales</taxon>
        <taxon>Pectobacteriaceae</taxon>
        <taxon>Pectobacterium</taxon>
    </lineage>
</organism>
<accession>C6DKP3</accession>
<keyword id="KW-0067">ATP-binding</keyword>
<keyword id="KW-0460">Magnesium</keyword>
<keyword id="KW-0464">Manganese</keyword>
<keyword id="KW-0479">Metal-binding</keyword>
<keyword id="KW-0547">Nucleotide-binding</keyword>
<keyword id="KW-0548">Nucleotidyltransferase</keyword>
<keyword id="KW-0808">Transferase</keyword>
<sequence length="483" mass="55559">MQQTPLFKNHYFHQLPEFYTALQPKPLHGARLLYHSEGLAAELGLSSDWFTPEQDAVWSGERLLPGMEPLAQVYSGHQFGMWAGQLGDGRGILLGEQQLADGRSMDWHLKGAGLTPYSRMGDGRAVLRSVIREFLASEAMHHLGIPTTRALTIVTSTHPVQREQEEKGAMLMRVAESHVRFGHFEHFYYRREPEKVRQLVEYVIARHWPQWENDERRYELWFGDVVERTARLITHWQAVGFSHGVMNTDNMSILGLTIDYGPYGFLDAYQPNFICNHSDHRGRYAFDNQPAVGLWNLHRLAQALSGLMDTDTLERALARYEPALMQHYGTLMRAKLGLFTASAEDNDVLVGLLRLMQQEGSDYTHTFRLLADSEKQASRAPLRDEFIDRAAFDSWFATYRQRLMQEEQGDEERRRLMNTTNPKFILRNYLAQMAIERAENDDISVLARLHQALCQPFDEQPDKNDLAALPPEWGKHLEISCSS</sequence>
<gene>
    <name evidence="1" type="primary">ydiU</name>
    <name evidence="1" type="synonym">selO</name>
    <name type="ordered locus">PC1_2463</name>
</gene>
<protein>
    <recommendedName>
        <fullName evidence="1">Protein nucleotidyltransferase YdiU</fullName>
        <ecNumber evidence="1">2.7.7.-</ecNumber>
    </recommendedName>
    <alternativeName>
        <fullName evidence="1">Protein adenylyltransferase YdiU</fullName>
        <ecNumber evidence="1">2.7.7.108</ecNumber>
    </alternativeName>
    <alternativeName>
        <fullName evidence="1">Protein uridylyltransferase YdiU</fullName>
        <ecNumber evidence="1">2.7.7.-</ecNumber>
    </alternativeName>
</protein>
<reference key="1">
    <citation type="submission" date="2009-07" db="EMBL/GenBank/DDBJ databases">
        <title>Complete sequence of Pectobacterium carotovorum subsp. carotovorum PC1.</title>
        <authorList>
            <consortium name="US DOE Joint Genome Institute"/>
            <person name="Lucas S."/>
            <person name="Copeland A."/>
            <person name="Lapidus A."/>
            <person name="Glavina del Rio T."/>
            <person name="Tice H."/>
            <person name="Bruce D."/>
            <person name="Goodwin L."/>
            <person name="Pitluck S."/>
            <person name="Munk A.C."/>
            <person name="Brettin T."/>
            <person name="Detter J.C."/>
            <person name="Han C."/>
            <person name="Tapia R."/>
            <person name="Larimer F."/>
            <person name="Land M."/>
            <person name="Hauser L."/>
            <person name="Kyrpides N."/>
            <person name="Mikhailova N."/>
            <person name="Balakrishnan V."/>
            <person name="Glasner J."/>
            <person name="Perna N.T."/>
        </authorList>
    </citation>
    <scope>NUCLEOTIDE SEQUENCE [LARGE SCALE GENOMIC DNA]</scope>
    <source>
        <strain>PC1</strain>
    </source>
</reference>
<name>SELO_PECCP</name>
<comment type="function">
    <text evidence="1">Nucleotidyltransferase involved in the post-translational modification of proteins. It can catalyze the addition of adenosine monophosphate (AMP) or uridine monophosphate (UMP) to a protein, resulting in modifications known as AMPylation and UMPylation.</text>
</comment>
<comment type="catalytic activity">
    <reaction evidence="1">
        <text>L-seryl-[protein] + ATP = 3-O-(5'-adenylyl)-L-seryl-[protein] + diphosphate</text>
        <dbReference type="Rhea" id="RHEA:58120"/>
        <dbReference type="Rhea" id="RHEA-COMP:9863"/>
        <dbReference type="Rhea" id="RHEA-COMP:15073"/>
        <dbReference type="ChEBI" id="CHEBI:29999"/>
        <dbReference type="ChEBI" id="CHEBI:30616"/>
        <dbReference type="ChEBI" id="CHEBI:33019"/>
        <dbReference type="ChEBI" id="CHEBI:142516"/>
        <dbReference type="EC" id="2.7.7.108"/>
    </reaction>
</comment>
<comment type="catalytic activity">
    <reaction evidence="1">
        <text>L-threonyl-[protein] + ATP = 3-O-(5'-adenylyl)-L-threonyl-[protein] + diphosphate</text>
        <dbReference type="Rhea" id="RHEA:54292"/>
        <dbReference type="Rhea" id="RHEA-COMP:11060"/>
        <dbReference type="Rhea" id="RHEA-COMP:13847"/>
        <dbReference type="ChEBI" id="CHEBI:30013"/>
        <dbReference type="ChEBI" id="CHEBI:30616"/>
        <dbReference type="ChEBI" id="CHEBI:33019"/>
        <dbReference type="ChEBI" id="CHEBI:138113"/>
        <dbReference type="EC" id="2.7.7.108"/>
    </reaction>
</comment>
<comment type="catalytic activity">
    <reaction evidence="1">
        <text>L-tyrosyl-[protein] + ATP = O-(5'-adenylyl)-L-tyrosyl-[protein] + diphosphate</text>
        <dbReference type="Rhea" id="RHEA:54288"/>
        <dbReference type="Rhea" id="RHEA-COMP:10136"/>
        <dbReference type="Rhea" id="RHEA-COMP:13846"/>
        <dbReference type="ChEBI" id="CHEBI:30616"/>
        <dbReference type="ChEBI" id="CHEBI:33019"/>
        <dbReference type="ChEBI" id="CHEBI:46858"/>
        <dbReference type="ChEBI" id="CHEBI:83624"/>
        <dbReference type="EC" id="2.7.7.108"/>
    </reaction>
</comment>
<comment type="catalytic activity">
    <reaction evidence="1">
        <text>L-histidyl-[protein] + UTP = N(tele)-(5'-uridylyl)-L-histidyl-[protein] + diphosphate</text>
        <dbReference type="Rhea" id="RHEA:83891"/>
        <dbReference type="Rhea" id="RHEA-COMP:9745"/>
        <dbReference type="Rhea" id="RHEA-COMP:20239"/>
        <dbReference type="ChEBI" id="CHEBI:29979"/>
        <dbReference type="ChEBI" id="CHEBI:33019"/>
        <dbReference type="ChEBI" id="CHEBI:46398"/>
        <dbReference type="ChEBI" id="CHEBI:233474"/>
    </reaction>
</comment>
<comment type="catalytic activity">
    <reaction evidence="1">
        <text>L-seryl-[protein] + UTP = O-(5'-uridylyl)-L-seryl-[protein] + diphosphate</text>
        <dbReference type="Rhea" id="RHEA:64604"/>
        <dbReference type="Rhea" id="RHEA-COMP:9863"/>
        <dbReference type="Rhea" id="RHEA-COMP:16635"/>
        <dbReference type="ChEBI" id="CHEBI:29999"/>
        <dbReference type="ChEBI" id="CHEBI:33019"/>
        <dbReference type="ChEBI" id="CHEBI:46398"/>
        <dbReference type="ChEBI" id="CHEBI:156051"/>
    </reaction>
</comment>
<comment type="catalytic activity">
    <reaction evidence="1">
        <text>L-tyrosyl-[protein] + UTP = O-(5'-uridylyl)-L-tyrosyl-[protein] + diphosphate</text>
        <dbReference type="Rhea" id="RHEA:83887"/>
        <dbReference type="Rhea" id="RHEA-COMP:10136"/>
        <dbReference type="Rhea" id="RHEA-COMP:20238"/>
        <dbReference type="ChEBI" id="CHEBI:33019"/>
        <dbReference type="ChEBI" id="CHEBI:46398"/>
        <dbReference type="ChEBI" id="CHEBI:46858"/>
        <dbReference type="ChEBI" id="CHEBI:90602"/>
    </reaction>
</comment>
<comment type="cofactor">
    <cofactor evidence="1">
        <name>Mg(2+)</name>
        <dbReference type="ChEBI" id="CHEBI:18420"/>
    </cofactor>
    <cofactor evidence="1">
        <name>Mn(2+)</name>
        <dbReference type="ChEBI" id="CHEBI:29035"/>
    </cofactor>
</comment>
<comment type="similarity">
    <text evidence="1">Belongs to the SELO family.</text>
</comment>
<feature type="chain" id="PRO_1000212595" description="Protein nucleotidyltransferase YdiU">
    <location>
        <begin position="1"/>
        <end position="483"/>
    </location>
</feature>
<feature type="active site" description="Proton acceptor" evidence="1">
    <location>
        <position position="249"/>
    </location>
</feature>
<feature type="binding site" evidence="1">
    <location>
        <position position="87"/>
    </location>
    <ligand>
        <name>ATP</name>
        <dbReference type="ChEBI" id="CHEBI:30616"/>
    </ligand>
</feature>
<feature type="binding site" evidence="1">
    <location>
        <position position="89"/>
    </location>
    <ligand>
        <name>ATP</name>
        <dbReference type="ChEBI" id="CHEBI:30616"/>
    </ligand>
</feature>
<feature type="binding site" evidence="1">
    <location>
        <position position="90"/>
    </location>
    <ligand>
        <name>ATP</name>
        <dbReference type="ChEBI" id="CHEBI:30616"/>
    </ligand>
</feature>
<feature type="binding site" evidence="1">
    <location>
        <position position="110"/>
    </location>
    <ligand>
        <name>ATP</name>
        <dbReference type="ChEBI" id="CHEBI:30616"/>
    </ligand>
</feature>
<feature type="binding site" evidence="1">
    <location>
        <position position="122"/>
    </location>
    <ligand>
        <name>ATP</name>
        <dbReference type="ChEBI" id="CHEBI:30616"/>
    </ligand>
</feature>
<feature type="binding site" evidence="1">
    <location>
        <position position="123"/>
    </location>
    <ligand>
        <name>ATP</name>
        <dbReference type="ChEBI" id="CHEBI:30616"/>
    </ligand>
</feature>
<feature type="binding site" evidence="1">
    <location>
        <position position="173"/>
    </location>
    <ligand>
        <name>ATP</name>
        <dbReference type="ChEBI" id="CHEBI:30616"/>
    </ligand>
</feature>
<feature type="binding site" evidence="1">
    <location>
        <position position="180"/>
    </location>
    <ligand>
        <name>ATP</name>
        <dbReference type="ChEBI" id="CHEBI:30616"/>
    </ligand>
</feature>
<feature type="binding site" evidence="1">
    <location>
        <position position="250"/>
    </location>
    <ligand>
        <name>Mg(2+)</name>
        <dbReference type="ChEBI" id="CHEBI:18420"/>
    </ligand>
</feature>
<feature type="binding site" evidence="1">
    <location>
        <position position="259"/>
    </location>
    <ligand>
        <name>ATP</name>
        <dbReference type="ChEBI" id="CHEBI:30616"/>
    </ligand>
</feature>
<feature type="binding site" evidence="1">
    <location>
        <position position="259"/>
    </location>
    <ligand>
        <name>Mg(2+)</name>
        <dbReference type="ChEBI" id="CHEBI:18420"/>
    </ligand>
</feature>
<proteinExistence type="inferred from homology"/>
<evidence type="ECO:0000255" key="1">
    <source>
        <dbReference type="HAMAP-Rule" id="MF_00692"/>
    </source>
</evidence>
<dbReference type="EC" id="2.7.7.-" evidence="1"/>
<dbReference type="EC" id="2.7.7.108" evidence="1"/>
<dbReference type="EMBL" id="CP001657">
    <property type="protein sequence ID" value="ACT13494.1"/>
    <property type="molecule type" value="Genomic_DNA"/>
</dbReference>
<dbReference type="RefSeq" id="WP_015840674.1">
    <property type="nucleotide sequence ID" value="NC_012917.1"/>
</dbReference>
<dbReference type="SMR" id="C6DKP3"/>
<dbReference type="STRING" id="561230.PC1_2463"/>
<dbReference type="KEGG" id="pct:PC1_2463"/>
<dbReference type="eggNOG" id="COG0397">
    <property type="taxonomic scope" value="Bacteria"/>
</dbReference>
<dbReference type="HOGENOM" id="CLU_010245_4_1_6"/>
<dbReference type="OrthoDB" id="9776281at2"/>
<dbReference type="Proteomes" id="UP000002736">
    <property type="component" value="Chromosome"/>
</dbReference>
<dbReference type="GO" id="GO:0070733">
    <property type="term" value="F:AMPylase activity"/>
    <property type="evidence" value="ECO:0007669"/>
    <property type="project" value="RHEA"/>
</dbReference>
<dbReference type="GO" id="GO:0005524">
    <property type="term" value="F:ATP binding"/>
    <property type="evidence" value="ECO:0007669"/>
    <property type="project" value="UniProtKB-UniRule"/>
</dbReference>
<dbReference type="GO" id="GO:0000287">
    <property type="term" value="F:magnesium ion binding"/>
    <property type="evidence" value="ECO:0007669"/>
    <property type="project" value="UniProtKB-UniRule"/>
</dbReference>
<dbReference type="HAMAP" id="MF_00692">
    <property type="entry name" value="YdiU_SelO"/>
    <property type="match status" value="1"/>
</dbReference>
<dbReference type="InterPro" id="IPR003846">
    <property type="entry name" value="SelO"/>
</dbReference>
<dbReference type="NCBIfam" id="NF000658">
    <property type="entry name" value="PRK00029.1"/>
    <property type="match status" value="1"/>
</dbReference>
<dbReference type="PANTHER" id="PTHR32057">
    <property type="entry name" value="PROTEIN ADENYLYLTRANSFERASE SELO, MITOCHONDRIAL"/>
    <property type="match status" value="1"/>
</dbReference>
<dbReference type="PANTHER" id="PTHR32057:SF14">
    <property type="entry name" value="PROTEIN ADENYLYLTRANSFERASE SELO, MITOCHONDRIAL"/>
    <property type="match status" value="1"/>
</dbReference>
<dbReference type="Pfam" id="PF02696">
    <property type="entry name" value="SelO"/>
    <property type="match status" value="1"/>
</dbReference>